<proteinExistence type="inferred from homology"/>
<gene>
    <name type="primary">TDS4</name>
    <name type="synonym">BRF1</name>
    <name type="ordered locus">KLLA0A05434g</name>
</gene>
<accession>P46070</accession>
<accession>Q6CXU9</accession>
<sequence>MASTLQVSSRKCKNCGSTDFVRDISNTTNELICKVCGLVTEENSIVSEVTFGEASNGAAVIQGAFVSANQAHPTFMSHSGQNALMSRETTLNNARRKLKAVSYALNIPEYVTDAAFQWYRLALSNNFVQGRKSQNVIAACLYIACRKERTHHMLIDFSSRLQVSVYSIGATFLKLAKKLQIVKLPLADPSLFIQHFAEKLELGDKKIKVIRDAVKLAQTMSRDWMYEGRRPAGIAGACLLLACRMNNLRRTHSEIVAISHVAEETLQQRLNEFKNTTSAKLSVKEFRDDETEVNEGERSAESKPPSFDKNRLKEKKIKDSLDTKEMLETSEEAVSRNPILTQVLGAQELSSKEVLYYLKKLSERRKAEFSRIKATHGIDGEDLHKTEKDKKRSLDEIDGYSLEKDPYRPRNLHLLPTTASLLSKVSDHPENLDDVDDAELDSHLLDEEASKLKERIWIDINGDYLIEQESKRLKQEADLASGNTSLRKKRSKRTNRNQSSASIVKVQVDGLPLDVSVDDADAVDVVAAGGVKNLLQKTTFSKKINYDAINGLFGQK</sequence>
<dbReference type="EMBL" id="Z47203">
    <property type="protein sequence ID" value="CAA87399.1"/>
    <property type="molecule type" value="Genomic_DNA"/>
</dbReference>
<dbReference type="EMBL" id="CR382121">
    <property type="protein sequence ID" value="CAH02828.1"/>
    <property type="molecule type" value="Genomic_DNA"/>
</dbReference>
<dbReference type="PIR" id="A55483">
    <property type="entry name" value="A55483"/>
</dbReference>
<dbReference type="RefSeq" id="XP_451240.1">
    <property type="nucleotide sequence ID" value="XM_451240.1"/>
</dbReference>
<dbReference type="SMR" id="P46070"/>
<dbReference type="FunCoup" id="P46070">
    <property type="interactions" value="510"/>
</dbReference>
<dbReference type="STRING" id="284590.P46070"/>
<dbReference type="PaxDb" id="284590-P46070"/>
<dbReference type="KEGG" id="kla:KLLA0_A05434g"/>
<dbReference type="eggNOG" id="KOG1598">
    <property type="taxonomic scope" value="Eukaryota"/>
</dbReference>
<dbReference type="HOGENOM" id="CLU_010293_3_3_1"/>
<dbReference type="InParanoid" id="P46070"/>
<dbReference type="OMA" id="EPPCKVM"/>
<dbReference type="Proteomes" id="UP000000598">
    <property type="component" value="Chromosome A"/>
</dbReference>
<dbReference type="GO" id="GO:0005634">
    <property type="term" value="C:nucleus"/>
    <property type="evidence" value="ECO:0007669"/>
    <property type="project" value="UniProtKB-SubCell"/>
</dbReference>
<dbReference type="GO" id="GO:0000126">
    <property type="term" value="C:transcription factor TFIIIB complex"/>
    <property type="evidence" value="ECO:0007669"/>
    <property type="project" value="TreeGrafter"/>
</dbReference>
<dbReference type="GO" id="GO:0097550">
    <property type="term" value="C:transcription preinitiation complex"/>
    <property type="evidence" value="ECO:0007669"/>
    <property type="project" value="TreeGrafter"/>
</dbReference>
<dbReference type="GO" id="GO:0000995">
    <property type="term" value="F:RNA polymerase III general transcription initiation factor activity"/>
    <property type="evidence" value="ECO:0007669"/>
    <property type="project" value="TreeGrafter"/>
</dbReference>
<dbReference type="GO" id="GO:0001006">
    <property type="term" value="F:RNA polymerase III type 3 promoter sequence-specific DNA binding"/>
    <property type="evidence" value="ECO:0007669"/>
    <property type="project" value="TreeGrafter"/>
</dbReference>
<dbReference type="GO" id="GO:0017025">
    <property type="term" value="F:TBP-class protein binding"/>
    <property type="evidence" value="ECO:0007669"/>
    <property type="project" value="InterPro"/>
</dbReference>
<dbReference type="GO" id="GO:0008270">
    <property type="term" value="F:zinc ion binding"/>
    <property type="evidence" value="ECO:0007669"/>
    <property type="project" value="UniProtKB-KW"/>
</dbReference>
<dbReference type="GO" id="GO:0070897">
    <property type="term" value="P:transcription preinitiation complex assembly"/>
    <property type="evidence" value="ECO:0007669"/>
    <property type="project" value="InterPro"/>
</dbReference>
<dbReference type="CDD" id="cd20553">
    <property type="entry name" value="CYCLIN_TFIIIB90_rpt1"/>
    <property type="match status" value="1"/>
</dbReference>
<dbReference type="CDD" id="cd20554">
    <property type="entry name" value="CYCLIN_TFIIIB90_rpt2"/>
    <property type="match status" value="1"/>
</dbReference>
<dbReference type="FunFam" id="1.10.472.10:FF:000002">
    <property type="entry name" value="Transcription factor IIIB 90 kDa subunit"/>
    <property type="match status" value="1"/>
</dbReference>
<dbReference type="FunFam" id="1.10.472.10:FF:000007">
    <property type="entry name" value="Transcription factor IIIB 90 kDa subunit"/>
    <property type="match status" value="1"/>
</dbReference>
<dbReference type="FunFam" id="1.20.5.650:FF:000004">
    <property type="entry name" value="Transcription factor TFIIIB subunit"/>
    <property type="match status" value="1"/>
</dbReference>
<dbReference type="Gene3D" id="2.20.25.10">
    <property type="match status" value="1"/>
</dbReference>
<dbReference type="Gene3D" id="1.10.472.10">
    <property type="entry name" value="Cyclin-like"/>
    <property type="match status" value="2"/>
</dbReference>
<dbReference type="Gene3D" id="1.20.5.650">
    <property type="entry name" value="Single helix bin"/>
    <property type="match status" value="1"/>
</dbReference>
<dbReference type="InterPro" id="IPR011665">
    <property type="entry name" value="BRF1_TBP-bd_dom"/>
</dbReference>
<dbReference type="InterPro" id="IPR013763">
    <property type="entry name" value="Cyclin-like_dom"/>
</dbReference>
<dbReference type="InterPro" id="IPR036915">
    <property type="entry name" value="Cyclin-like_sf"/>
</dbReference>
<dbReference type="InterPro" id="IPR000812">
    <property type="entry name" value="TFIIB"/>
</dbReference>
<dbReference type="InterPro" id="IPR023486">
    <property type="entry name" value="TFIIB_CS"/>
</dbReference>
<dbReference type="InterPro" id="IPR013150">
    <property type="entry name" value="TFIIB_cyclin"/>
</dbReference>
<dbReference type="InterPro" id="IPR013137">
    <property type="entry name" value="Znf_TFIIB"/>
</dbReference>
<dbReference type="PANTHER" id="PTHR11618:SF4">
    <property type="entry name" value="TRANSCRIPTION FACTOR IIIB 90 KDA SUBUNIT"/>
    <property type="match status" value="1"/>
</dbReference>
<dbReference type="PANTHER" id="PTHR11618">
    <property type="entry name" value="TRANSCRIPTION INITIATION FACTOR IIB-RELATED"/>
    <property type="match status" value="1"/>
</dbReference>
<dbReference type="Pfam" id="PF07741">
    <property type="entry name" value="BRF1"/>
    <property type="match status" value="1"/>
</dbReference>
<dbReference type="Pfam" id="PF00382">
    <property type="entry name" value="TFIIB"/>
    <property type="match status" value="2"/>
</dbReference>
<dbReference type="Pfam" id="PF08271">
    <property type="entry name" value="Zn_Ribbon_TF"/>
    <property type="match status" value="1"/>
</dbReference>
<dbReference type="PRINTS" id="PR00685">
    <property type="entry name" value="TIFACTORIIB"/>
</dbReference>
<dbReference type="SMART" id="SM00385">
    <property type="entry name" value="CYCLIN"/>
    <property type="match status" value="2"/>
</dbReference>
<dbReference type="SUPFAM" id="SSF47954">
    <property type="entry name" value="Cyclin-like"/>
    <property type="match status" value="2"/>
</dbReference>
<dbReference type="SUPFAM" id="SSF57783">
    <property type="entry name" value="Zinc beta-ribbon"/>
    <property type="match status" value="1"/>
</dbReference>
<dbReference type="PROSITE" id="PS00782">
    <property type="entry name" value="TFIIB"/>
    <property type="match status" value="2"/>
</dbReference>
<dbReference type="PROSITE" id="PS51134">
    <property type="entry name" value="ZF_TFIIB"/>
    <property type="match status" value="1"/>
</dbReference>
<evidence type="ECO:0000255" key="1">
    <source>
        <dbReference type="PROSITE-ProRule" id="PRU00469"/>
    </source>
</evidence>
<evidence type="ECO:0000256" key="2">
    <source>
        <dbReference type="SAM" id="MobiDB-lite"/>
    </source>
</evidence>
<evidence type="ECO:0000305" key="3"/>
<organism>
    <name type="scientific">Kluyveromyces lactis (strain ATCC 8585 / CBS 2359 / DSM 70799 / NBRC 1267 / NRRL Y-1140 / WM37)</name>
    <name type="common">Yeast</name>
    <name type="synonym">Candida sphaerica</name>
    <dbReference type="NCBI Taxonomy" id="284590"/>
    <lineage>
        <taxon>Eukaryota</taxon>
        <taxon>Fungi</taxon>
        <taxon>Dikarya</taxon>
        <taxon>Ascomycota</taxon>
        <taxon>Saccharomycotina</taxon>
        <taxon>Saccharomycetes</taxon>
        <taxon>Saccharomycetales</taxon>
        <taxon>Saccharomycetaceae</taxon>
        <taxon>Kluyveromyces</taxon>
    </lineage>
</organism>
<name>TF3B_KLULA</name>
<comment type="function">
    <text>General activator of RNA polymerase III transcription. Interacts with TBP. Binds to Pol III subunit C34 and to the TAU135 component of TFIIIC.</text>
</comment>
<comment type="subunit">
    <text>TFIIIB comprises the TATA-binding protein (TBP), the B-related factor (BRF) and a 70 kDa polypeptide.</text>
</comment>
<comment type="subcellular location">
    <subcellularLocation>
        <location>Nucleus</location>
    </subcellularLocation>
</comment>
<comment type="similarity">
    <text evidence="3">Belongs to the TFIIB family.</text>
</comment>
<feature type="chain" id="PRO_0000119344" description="Transcription factor IIIB 70 kDa subunit">
    <location>
        <begin position="1"/>
        <end position="556"/>
    </location>
</feature>
<feature type="repeat" description="1">
    <location>
        <begin position="98"/>
        <end position="174"/>
    </location>
</feature>
<feature type="repeat" description="2">
    <location>
        <begin position="193"/>
        <end position="272"/>
    </location>
</feature>
<feature type="zinc finger region" description="TFIIB-type" evidence="1">
    <location>
        <begin position="8"/>
        <end position="41"/>
    </location>
</feature>
<feature type="region of interest" description="Interaction with TBP and with the Pol III subunit C34">
    <location>
        <begin position="98"/>
        <end position="272"/>
    </location>
</feature>
<feature type="region of interest" description="Interaction with TBP">
    <location>
        <begin position="284"/>
        <end position="556"/>
    </location>
</feature>
<feature type="region of interest" description="Disordered" evidence="2">
    <location>
        <begin position="287"/>
        <end position="309"/>
    </location>
</feature>
<feature type="region of interest" description="Disordered" evidence="2">
    <location>
        <begin position="477"/>
        <end position="501"/>
    </location>
</feature>
<feature type="compositionally biased region" description="Basic and acidic residues" evidence="2">
    <location>
        <begin position="295"/>
        <end position="309"/>
    </location>
</feature>
<feature type="compositionally biased region" description="Basic residues" evidence="2">
    <location>
        <begin position="486"/>
        <end position="495"/>
    </location>
</feature>
<feature type="binding site" evidence="1">
    <location>
        <position position="12"/>
    </location>
    <ligand>
        <name>Zn(2+)</name>
        <dbReference type="ChEBI" id="CHEBI:29105"/>
    </ligand>
</feature>
<feature type="binding site" evidence="1">
    <location>
        <position position="15"/>
    </location>
    <ligand>
        <name>Zn(2+)</name>
        <dbReference type="ChEBI" id="CHEBI:29105"/>
    </ligand>
</feature>
<feature type="binding site" evidence="1">
    <location>
        <position position="33"/>
    </location>
    <ligand>
        <name>Zn(2+)</name>
        <dbReference type="ChEBI" id="CHEBI:29105"/>
    </ligand>
</feature>
<feature type="binding site" evidence="1">
    <location>
        <position position="36"/>
    </location>
    <ligand>
        <name>Zn(2+)</name>
        <dbReference type="ChEBI" id="CHEBI:29105"/>
    </ligand>
</feature>
<feature type="sequence conflict" description="In Ref. 1; CAA87399." evidence="3" ref="1">
    <original>VT</original>
    <variation>LA</variation>
    <location>
        <begin position="49"/>
        <end position="50"/>
    </location>
</feature>
<feature type="sequence conflict" description="In Ref. 1; CAA87399." evidence="3" ref="1">
    <original>R</original>
    <variation>H</variation>
    <location>
        <position position="371"/>
    </location>
</feature>
<keyword id="KW-0010">Activator</keyword>
<keyword id="KW-0479">Metal-binding</keyword>
<keyword id="KW-0539">Nucleus</keyword>
<keyword id="KW-1185">Reference proteome</keyword>
<keyword id="KW-0677">Repeat</keyword>
<keyword id="KW-0804">Transcription</keyword>
<keyword id="KW-0805">Transcription regulation</keyword>
<keyword id="KW-0862">Zinc</keyword>
<keyword id="KW-0863">Zinc-finger</keyword>
<reference key="1">
    <citation type="journal article" date="1994" name="Genes Dev.">
        <title>Conserved functional domains of the RNA polymerase III general transcription factor BRF.</title>
        <authorList>
            <person name="Khoo B."/>
            <person name="Brophy B."/>
            <person name="Jackson S.P."/>
        </authorList>
    </citation>
    <scope>NUCLEOTIDE SEQUENCE [GENOMIC DNA]</scope>
</reference>
<reference key="2">
    <citation type="journal article" date="2004" name="Nature">
        <title>Genome evolution in yeasts.</title>
        <authorList>
            <person name="Dujon B."/>
            <person name="Sherman D."/>
            <person name="Fischer G."/>
            <person name="Durrens P."/>
            <person name="Casaregola S."/>
            <person name="Lafontaine I."/>
            <person name="de Montigny J."/>
            <person name="Marck C."/>
            <person name="Neuveglise C."/>
            <person name="Talla E."/>
            <person name="Goffard N."/>
            <person name="Frangeul L."/>
            <person name="Aigle M."/>
            <person name="Anthouard V."/>
            <person name="Babour A."/>
            <person name="Barbe V."/>
            <person name="Barnay S."/>
            <person name="Blanchin S."/>
            <person name="Beckerich J.-M."/>
            <person name="Beyne E."/>
            <person name="Bleykasten C."/>
            <person name="Boisrame A."/>
            <person name="Boyer J."/>
            <person name="Cattolico L."/>
            <person name="Confanioleri F."/>
            <person name="de Daruvar A."/>
            <person name="Despons L."/>
            <person name="Fabre E."/>
            <person name="Fairhead C."/>
            <person name="Ferry-Dumazet H."/>
            <person name="Groppi A."/>
            <person name="Hantraye F."/>
            <person name="Hennequin C."/>
            <person name="Jauniaux N."/>
            <person name="Joyet P."/>
            <person name="Kachouri R."/>
            <person name="Kerrest A."/>
            <person name="Koszul R."/>
            <person name="Lemaire M."/>
            <person name="Lesur I."/>
            <person name="Ma L."/>
            <person name="Muller H."/>
            <person name="Nicaud J.-M."/>
            <person name="Nikolski M."/>
            <person name="Oztas S."/>
            <person name="Ozier-Kalogeropoulos O."/>
            <person name="Pellenz S."/>
            <person name="Potier S."/>
            <person name="Richard G.-F."/>
            <person name="Straub M.-L."/>
            <person name="Suleau A."/>
            <person name="Swennen D."/>
            <person name="Tekaia F."/>
            <person name="Wesolowski-Louvel M."/>
            <person name="Westhof E."/>
            <person name="Wirth B."/>
            <person name="Zeniou-Meyer M."/>
            <person name="Zivanovic Y."/>
            <person name="Bolotin-Fukuhara M."/>
            <person name="Thierry A."/>
            <person name="Bouchier C."/>
            <person name="Caudron B."/>
            <person name="Scarpelli C."/>
            <person name="Gaillardin C."/>
            <person name="Weissenbach J."/>
            <person name="Wincker P."/>
            <person name="Souciet J.-L."/>
        </authorList>
    </citation>
    <scope>NUCLEOTIDE SEQUENCE [LARGE SCALE GENOMIC DNA]</scope>
    <source>
        <strain>ATCC 8585 / CBS 2359 / DSM 70799 / NBRC 1267 / NRRL Y-1140 / WM37</strain>
    </source>
</reference>
<protein>
    <recommendedName>
        <fullName>Transcription factor IIIB 70 kDa subunit</fullName>
        <shortName>TFIIIB</shortName>
    </recommendedName>
    <alternativeName>
        <fullName>B-related factor 1</fullName>
        <shortName>BRF-1</shortName>
    </alternativeName>
</protein>